<organism>
    <name type="scientific">Natranaerobius thermophilus (strain ATCC BAA-1301 / DSM 18059 / JW/NM-WN-LF)</name>
    <dbReference type="NCBI Taxonomy" id="457570"/>
    <lineage>
        <taxon>Bacteria</taxon>
        <taxon>Bacillati</taxon>
        <taxon>Bacillota</taxon>
        <taxon>Clostridia</taxon>
        <taxon>Natranaerobiales</taxon>
        <taxon>Natranaerobiaceae</taxon>
        <taxon>Natranaerobius</taxon>
    </lineage>
</organism>
<protein>
    <recommendedName>
        <fullName evidence="1">tRNA-specific 2-thiouridylase MnmA</fullName>
        <ecNumber evidence="1">2.8.1.13</ecNumber>
    </recommendedName>
</protein>
<name>MNMA_NATTJ</name>
<dbReference type="EC" id="2.8.1.13" evidence="1"/>
<dbReference type="EMBL" id="CP001034">
    <property type="protein sequence ID" value="ACB85356.1"/>
    <property type="molecule type" value="Genomic_DNA"/>
</dbReference>
<dbReference type="RefSeq" id="WP_012448223.1">
    <property type="nucleotide sequence ID" value="NZ_CP144221.1"/>
</dbReference>
<dbReference type="SMR" id="B2A5K1"/>
<dbReference type="FunCoup" id="B2A5K1">
    <property type="interactions" value="410"/>
</dbReference>
<dbReference type="STRING" id="457570.Nther_1784"/>
<dbReference type="KEGG" id="nth:Nther_1784"/>
<dbReference type="eggNOG" id="COG0482">
    <property type="taxonomic scope" value="Bacteria"/>
</dbReference>
<dbReference type="HOGENOM" id="CLU_035188_0_0_9"/>
<dbReference type="InParanoid" id="B2A5K1"/>
<dbReference type="OrthoDB" id="9800696at2"/>
<dbReference type="Proteomes" id="UP000001683">
    <property type="component" value="Chromosome"/>
</dbReference>
<dbReference type="GO" id="GO:0005737">
    <property type="term" value="C:cytoplasm"/>
    <property type="evidence" value="ECO:0007669"/>
    <property type="project" value="UniProtKB-SubCell"/>
</dbReference>
<dbReference type="GO" id="GO:0005524">
    <property type="term" value="F:ATP binding"/>
    <property type="evidence" value="ECO:0007669"/>
    <property type="project" value="UniProtKB-KW"/>
</dbReference>
<dbReference type="GO" id="GO:0000049">
    <property type="term" value="F:tRNA binding"/>
    <property type="evidence" value="ECO:0007669"/>
    <property type="project" value="UniProtKB-KW"/>
</dbReference>
<dbReference type="GO" id="GO:0103016">
    <property type="term" value="F:tRNA-uridine 2-sulfurtransferase activity"/>
    <property type="evidence" value="ECO:0007669"/>
    <property type="project" value="UniProtKB-EC"/>
</dbReference>
<dbReference type="GO" id="GO:0002143">
    <property type="term" value="P:tRNA wobble position uridine thiolation"/>
    <property type="evidence" value="ECO:0007669"/>
    <property type="project" value="TreeGrafter"/>
</dbReference>
<dbReference type="CDD" id="cd01998">
    <property type="entry name" value="MnmA_TRMU-like"/>
    <property type="match status" value="1"/>
</dbReference>
<dbReference type="FunFam" id="2.30.30.280:FF:000001">
    <property type="entry name" value="tRNA-specific 2-thiouridylase MnmA"/>
    <property type="match status" value="1"/>
</dbReference>
<dbReference type="FunFam" id="3.40.50.620:FF:000115">
    <property type="entry name" value="tRNA-specific 2-thiouridylase MnmA"/>
    <property type="match status" value="1"/>
</dbReference>
<dbReference type="Gene3D" id="2.30.30.280">
    <property type="entry name" value="Adenine nucleotide alpha hydrolases-like domains"/>
    <property type="match status" value="1"/>
</dbReference>
<dbReference type="Gene3D" id="3.40.50.620">
    <property type="entry name" value="HUPs"/>
    <property type="match status" value="1"/>
</dbReference>
<dbReference type="Gene3D" id="2.40.30.10">
    <property type="entry name" value="Translation factors"/>
    <property type="match status" value="1"/>
</dbReference>
<dbReference type="HAMAP" id="MF_00144">
    <property type="entry name" value="tRNA_thiouridyl_MnmA"/>
    <property type="match status" value="1"/>
</dbReference>
<dbReference type="InterPro" id="IPR004506">
    <property type="entry name" value="MnmA-like"/>
</dbReference>
<dbReference type="InterPro" id="IPR046885">
    <property type="entry name" value="MnmA-like_C"/>
</dbReference>
<dbReference type="InterPro" id="IPR046884">
    <property type="entry name" value="MnmA-like_central"/>
</dbReference>
<dbReference type="InterPro" id="IPR023382">
    <property type="entry name" value="MnmA-like_central_sf"/>
</dbReference>
<dbReference type="InterPro" id="IPR014729">
    <property type="entry name" value="Rossmann-like_a/b/a_fold"/>
</dbReference>
<dbReference type="NCBIfam" id="NF001138">
    <property type="entry name" value="PRK00143.1"/>
    <property type="match status" value="1"/>
</dbReference>
<dbReference type="NCBIfam" id="TIGR00420">
    <property type="entry name" value="trmU"/>
    <property type="match status" value="1"/>
</dbReference>
<dbReference type="PANTHER" id="PTHR11933:SF5">
    <property type="entry name" value="MITOCHONDRIAL TRNA-SPECIFIC 2-THIOURIDYLASE 1"/>
    <property type="match status" value="1"/>
</dbReference>
<dbReference type="PANTHER" id="PTHR11933">
    <property type="entry name" value="TRNA 5-METHYLAMINOMETHYL-2-THIOURIDYLATE -METHYLTRANSFERASE"/>
    <property type="match status" value="1"/>
</dbReference>
<dbReference type="Pfam" id="PF03054">
    <property type="entry name" value="tRNA_Me_trans"/>
    <property type="match status" value="1"/>
</dbReference>
<dbReference type="Pfam" id="PF20258">
    <property type="entry name" value="tRNA_Me_trans_C"/>
    <property type="match status" value="1"/>
</dbReference>
<dbReference type="Pfam" id="PF20259">
    <property type="entry name" value="tRNA_Me_trans_M"/>
    <property type="match status" value="1"/>
</dbReference>
<dbReference type="SUPFAM" id="SSF52402">
    <property type="entry name" value="Adenine nucleotide alpha hydrolases-like"/>
    <property type="match status" value="1"/>
</dbReference>
<feature type="chain" id="PRO_0000349711" description="tRNA-specific 2-thiouridylase MnmA">
    <location>
        <begin position="1"/>
        <end position="368"/>
    </location>
</feature>
<feature type="region of interest" description="Interaction with tRNA" evidence="1">
    <location>
        <begin position="156"/>
        <end position="158"/>
    </location>
</feature>
<feature type="region of interest" description="Interaction with tRNA" evidence="1">
    <location>
        <begin position="312"/>
        <end position="313"/>
    </location>
</feature>
<feature type="active site" description="Nucleophile" evidence="1">
    <location>
        <position position="108"/>
    </location>
</feature>
<feature type="active site" description="Cysteine persulfide intermediate" evidence="1">
    <location>
        <position position="206"/>
    </location>
</feature>
<feature type="binding site" evidence="1">
    <location>
        <begin position="10"/>
        <end position="17"/>
    </location>
    <ligand>
        <name>ATP</name>
        <dbReference type="ChEBI" id="CHEBI:30616"/>
    </ligand>
</feature>
<feature type="binding site" evidence="1">
    <location>
        <position position="36"/>
    </location>
    <ligand>
        <name>ATP</name>
        <dbReference type="ChEBI" id="CHEBI:30616"/>
    </ligand>
</feature>
<feature type="binding site" evidence="1">
    <location>
        <position position="132"/>
    </location>
    <ligand>
        <name>ATP</name>
        <dbReference type="ChEBI" id="CHEBI:30616"/>
    </ligand>
</feature>
<feature type="site" description="Interaction with tRNA" evidence="1">
    <location>
        <position position="133"/>
    </location>
</feature>
<feature type="site" description="Interaction with tRNA" evidence="1">
    <location>
        <position position="345"/>
    </location>
</feature>
<feature type="disulfide bond" description="Alternate" evidence="1">
    <location>
        <begin position="108"/>
        <end position="206"/>
    </location>
</feature>
<comment type="function">
    <text evidence="1">Catalyzes the 2-thiolation of uridine at the wobble position (U34) of tRNA, leading to the formation of s(2)U34.</text>
</comment>
<comment type="catalytic activity">
    <reaction evidence="1">
        <text>S-sulfanyl-L-cysteinyl-[protein] + uridine(34) in tRNA + AH2 + ATP = 2-thiouridine(34) in tRNA + L-cysteinyl-[protein] + A + AMP + diphosphate + H(+)</text>
        <dbReference type="Rhea" id="RHEA:47032"/>
        <dbReference type="Rhea" id="RHEA-COMP:10131"/>
        <dbReference type="Rhea" id="RHEA-COMP:11726"/>
        <dbReference type="Rhea" id="RHEA-COMP:11727"/>
        <dbReference type="Rhea" id="RHEA-COMP:11728"/>
        <dbReference type="ChEBI" id="CHEBI:13193"/>
        <dbReference type="ChEBI" id="CHEBI:15378"/>
        <dbReference type="ChEBI" id="CHEBI:17499"/>
        <dbReference type="ChEBI" id="CHEBI:29950"/>
        <dbReference type="ChEBI" id="CHEBI:30616"/>
        <dbReference type="ChEBI" id="CHEBI:33019"/>
        <dbReference type="ChEBI" id="CHEBI:61963"/>
        <dbReference type="ChEBI" id="CHEBI:65315"/>
        <dbReference type="ChEBI" id="CHEBI:87170"/>
        <dbReference type="ChEBI" id="CHEBI:456215"/>
        <dbReference type="EC" id="2.8.1.13"/>
    </reaction>
</comment>
<comment type="subcellular location">
    <subcellularLocation>
        <location evidence="1">Cytoplasm</location>
    </subcellularLocation>
</comment>
<comment type="similarity">
    <text evidence="1">Belongs to the MnmA/TRMU family.</text>
</comment>
<sequence>MMMSNRVLVAMSGGVDSSVAALMLKEQGYEVIGAHMRIWYREEDEELYEQNVKGCCSLAAVHDAKRVADKIGIPFYVLNFKEPFYDWVVKNFIDEYLQGRTPNPCIACNRFIKWEEFLKRAMALECDYIATGHYSKIVYDNLKNRYLLYRGKDKTKDQSYMLSQLTQEQLARTLFPLGDYYKEDVRNIAEQNELGVADKPDSQEICFVPNNDYGEFLQSVVPEHINPGPILDAQGNKLGEHKGIAFYTIGQRRGLGISLGRPVYVIDIDADNNALIVGDKEELYSDGLIAEEINLIPYEQIENSIDIECKIRYNSRNVSSTLQPYGNDQLLVKFNQPVEAVTPGQGVTFYQDDLVIGGGTILKATTKK</sequence>
<proteinExistence type="inferred from homology"/>
<reference key="1">
    <citation type="submission" date="2008-04" db="EMBL/GenBank/DDBJ databases">
        <title>Complete sequence of chromosome of Natranaerobius thermophilus JW/NM-WN-LF.</title>
        <authorList>
            <consortium name="US DOE Joint Genome Institute"/>
            <person name="Copeland A."/>
            <person name="Lucas S."/>
            <person name="Lapidus A."/>
            <person name="Glavina del Rio T."/>
            <person name="Dalin E."/>
            <person name="Tice H."/>
            <person name="Bruce D."/>
            <person name="Goodwin L."/>
            <person name="Pitluck S."/>
            <person name="Chertkov O."/>
            <person name="Brettin T."/>
            <person name="Detter J.C."/>
            <person name="Han C."/>
            <person name="Kuske C.R."/>
            <person name="Schmutz J."/>
            <person name="Larimer F."/>
            <person name="Land M."/>
            <person name="Hauser L."/>
            <person name="Kyrpides N."/>
            <person name="Lykidis A."/>
            <person name="Mesbah N.M."/>
            <person name="Wiegel J."/>
        </authorList>
    </citation>
    <scope>NUCLEOTIDE SEQUENCE [LARGE SCALE GENOMIC DNA]</scope>
    <source>
        <strain>ATCC BAA-1301 / DSM 18059 / JW/NM-WN-LF</strain>
    </source>
</reference>
<accession>B2A5K1</accession>
<keyword id="KW-0067">ATP-binding</keyword>
<keyword id="KW-0963">Cytoplasm</keyword>
<keyword id="KW-1015">Disulfide bond</keyword>
<keyword id="KW-0547">Nucleotide-binding</keyword>
<keyword id="KW-1185">Reference proteome</keyword>
<keyword id="KW-0694">RNA-binding</keyword>
<keyword id="KW-0808">Transferase</keyword>
<keyword id="KW-0819">tRNA processing</keyword>
<keyword id="KW-0820">tRNA-binding</keyword>
<gene>
    <name evidence="1" type="primary">mnmA</name>
    <name type="ordered locus">Nther_1784</name>
</gene>
<evidence type="ECO:0000255" key="1">
    <source>
        <dbReference type="HAMAP-Rule" id="MF_00144"/>
    </source>
</evidence>